<sequence>MTLALISTETTEEPSCKASVAAPAPKGGAQIGVKAARRPSELLQRDGAHDVAVAIPDDFELDFGGTLTQKRVIGRLHGKANAPLIVVAGGISADRYVHRTETKGLGWWSGAVGVRAPIDLTRFRVLAFDFAPEFGEDVKDAKTPLTITTQDQARLLALLLDHLGVEKVAAFIGCSYGGMIALAFGELFPDWAEQLVVVSAAHRPHPLATAWRGIQRRILQLGLETGRIDQAVGLARELAMTTYRTQEEFGDRFDSEAPSHAGQAYPVCDYLQARGRAYRDRTTPSRWLSLSDSIDRHRVEPEAITAPVTLIGFTTDRLCPIEDMRELADRLPNLWRFEQHASVYGHDAFLKEDKLVADILTSVLKDIDQ</sequence>
<comment type="function">
    <text evidence="1 2">Transfers a succinyl group from succinyl-CoA to L-homoserine, forming succinyl-L-homoserine.</text>
</comment>
<comment type="catalytic activity">
    <reaction evidence="1 2">
        <text>L-homoserine + succinyl-CoA = O-succinyl-L-homoserine + CoA</text>
        <dbReference type="Rhea" id="RHEA:22008"/>
        <dbReference type="ChEBI" id="CHEBI:57287"/>
        <dbReference type="ChEBI" id="CHEBI:57292"/>
        <dbReference type="ChEBI" id="CHEBI:57476"/>
        <dbReference type="ChEBI" id="CHEBI:57661"/>
        <dbReference type="EC" id="2.3.1.46"/>
    </reaction>
</comment>
<comment type="pathway">
    <text evidence="1">Amino-acid biosynthesis; L-methionine biosynthesis via de novo pathway; O-succinyl-L-homoserine from L-homoserine: step 1/1.</text>
</comment>
<comment type="subunit">
    <text evidence="1">Homodimer.</text>
</comment>
<comment type="subcellular location">
    <subcellularLocation>
        <location evidence="1">Cytoplasm</location>
    </subcellularLocation>
</comment>
<comment type="similarity">
    <text evidence="1">Belongs to the AB hydrolase superfamily. MetX family.</text>
</comment>
<feature type="chain" id="PRO_0000440300" description="Homoserine O-succinyltransferase">
    <location>
        <begin position="1"/>
        <end position="369"/>
    </location>
</feature>
<feature type="domain" description="AB hydrolase-1" evidence="1">
    <location>
        <begin position="107"/>
        <end position="353"/>
    </location>
</feature>
<feature type="region of interest" description="Important for substrate specificity" evidence="1">
    <location>
        <begin position="90"/>
        <end position="93"/>
    </location>
</feature>
<feature type="active site" description="Nucleophile" evidence="1">
    <location>
        <position position="175"/>
    </location>
</feature>
<feature type="active site" evidence="1">
    <location>
        <position position="316"/>
    </location>
</feature>
<feature type="active site" evidence="1">
    <location>
        <position position="346"/>
    </location>
</feature>
<feature type="binding site" evidence="1">
    <location>
        <position position="236"/>
    </location>
    <ligand>
        <name>substrate</name>
    </ligand>
</feature>
<feature type="binding site" evidence="1">
    <location>
        <position position="347"/>
    </location>
    <ligand>
        <name>substrate</name>
    </ligand>
</feature>
<feature type="site" description="Important for substrate specificity" evidence="1 4">
    <location>
        <position position="176"/>
    </location>
</feature>
<feature type="site" description="Important for acyl-CoA specificity" evidence="1 4">
    <location>
        <position position="212"/>
    </location>
</feature>
<evidence type="ECO:0000255" key="1">
    <source>
        <dbReference type="HAMAP-Rule" id="MF_00296"/>
    </source>
</evidence>
<evidence type="ECO:0000269" key="2">
    <source>
    </source>
</evidence>
<evidence type="ECO:0000303" key="3">
    <source>
    </source>
</evidence>
<evidence type="ECO:0000305" key="4">
    <source>
    </source>
</evidence>
<evidence type="ECO:0000312" key="5">
    <source>
        <dbReference type="EMBL" id="EGF96431.1"/>
    </source>
</evidence>
<reference key="1">
    <citation type="submission" date="2011-03" db="EMBL/GenBank/DDBJ databases">
        <title>Draft genome sequence of Brevundimonas diminuta.</title>
        <authorList>
            <person name="Brown P.J.B."/>
            <person name="Buechlein A."/>
            <person name="Hemmerich C."/>
            <person name="Brun Y.V."/>
        </authorList>
    </citation>
    <scope>NUCLEOTIDE SEQUENCE [LARGE SCALE GENOMIC DNA]</scope>
    <source>
        <strain>ATCC 11568 / DSM 7234 / JCM 2788/ NBRC 12697 / NCIMB 9393 / NCTC 8545</strain>
    </source>
</reference>
<reference key="2">
    <citation type="journal article" date="2017" name="Nat. Chem. Biol.">
        <title>Parallel evolution of non-homologous isofunctional enzymes in methionine biosynthesis.</title>
        <authorList>
            <person name="Bastard K."/>
            <person name="Perret A."/>
            <person name="Mariage A."/>
            <person name="Bessonnet T."/>
            <person name="Pinet-Turpault A."/>
            <person name="Petit J.L."/>
            <person name="Darii E."/>
            <person name="Bazire P."/>
            <person name="Vergne-Vaxelaire C."/>
            <person name="Brewee C."/>
            <person name="Debard A."/>
            <person name="Pellouin V."/>
            <person name="Besnard-Gonnet M."/>
            <person name="Artiguenave F."/>
            <person name="Medigue C."/>
            <person name="Vallenet D."/>
            <person name="Danchin A."/>
            <person name="Zaparucha A."/>
            <person name="Weissenbach J."/>
            <person name="Salanoubat M."/>
            <person name="de Berardinis V."/>
        </authorList>
    </citation>
    <scope>FUNCTION</scope>
    <scope>CATALYTIC ACTIVITY</scope>
</reference>
<protein>
    <recommendedName>
        <fullName evidence="1">Homoserine O-succinyltransferase</fullName>
        <shortName evidence="1 3">HST</shortName>
        <ecNumber evidence="1 2">2.3.1.46</ecNumber>
    </recommendedName>
    <alternativeName>
        <fullName evidence="1">Homoserine transsuccinylase</fullName>
        <shortName evidence="1">HTS</shortName>
    </alternativeName>
</protein>
<proteinExistence type="evidence at protein level"/>
<keyword id="KW-0012">Acyltransferase</keyword>
<keyword id="KW-0028">Amino-acid biosynthesis</keyword>
<keyword id="KW-0963">Cytoplasm</keyword>
<keyword id="KW-0486">Methionine biosynthesis</keyword>
<keyword id="KW-0808">Transferase</keyword>
<accession>F4QV02</accession>
<organism>
    <name type="scientific">Brevundimonas diminuta (strain ATCC 11568 / DSM 7234 / NBRC 12697 / NCIMB 9393 / NCTC 8545)</name>
    <dbReference type="NCBI Taxonomy" id="751586"/>
    <lineage>
        <taxon>Bacteria</taxon>
        <taxon>Pseudomonadati</taxon>
        <taxon>Pseudomonadota</taxon>
        <taxon>Alphaproteobacteria</taxon>
        <taxon>Caulobacterales</taxon>
        <taxon>Caulobacteraceae</taxon>
        <taxon>Brevundimonas</taxon>
    </lineage>
</organism>
<name>METXS_BREDA</name>
<gene>
    <name evidence="1 3" type="primary">metXS</name>
    <name evidence="5" type="ORF">BDIM_02360</name>
</gene>
<dbReference type="EC" id="2.3.1.46" evidence="1 2"/>
<dbReference type="EMBL" id="GL883084">
    <property type="protein sequence ID" value="EGF96431.1"/>
    <property type="molecule type" value="Genomic_DNA"/>
</dbReference>
<dbReference type="RefSeq" id="WP_003163757.1">
    <property type="nucleotide sequence ID" value="NZ_GL883084.1"/>
</dbReference>
<dbReference type="SMR" id="F4QV02"/>
<dbReference type="ESTHER" id="breda-metxs">
    <property type="family name" value="Homoserine_transacetylase"/>
</dbReference>
<dbReference type="GeneID" id="56578021"/>
<dbReference type="HOGENOM" id="CLU_028760_3_0_5"/>
<dbReference type="UniPathway" id="UPA00051">
    <property type="reaction ID" value="UER00075"/>
</dbReference>
<dbReference type="GO" id="GO:0005737">
    <property type="term" value="C:cytoplasm"/>
    <property type="evidence" value="ECO:0007669"/>
    <property type="project" value="UniProtKB-SubCell"/>
</dbReference>
<dbReference type="GO" id="GO:0004414">
    <property type="term" value="F:homoserine O-acetyltransferase activity"/>
    <property type="evidence" value="ECO:0007669"/>
    <property type="project" value="TreeGrafter"/>
</dbReference>
<dbReference type="GO" id="GO:0008899">
    <property type="term" value="F:homoserine O-succinyltransferase activity"/>
    <property type="evidence" value="ECO:0007669"/>
    <property type="project" value="UniProtKB-UniRule"/>
</dbReference>
<dbReference type="GO" id="GO:0009092">
    <property type="term" value="P:homoserine metabolic process"/>
    <property type="evidence" value="ECO:0007669"/>
    <property type="project" value="TreeGrafter"/>
</dbReference>
<dbReference type="GO" id="GO:0009086">
    <property type="term" value="P:methionine biosynthetic process"/>
    <property type="evidence" value="ECO:0007669"/>
    <property type="project" value="UniProtKB-UniRule"/>
</dbReference>
<dbReference type="Gene3D" id="3.40.50.1820">
    <property type="entry name" value="alpha/beta hydrolase"/>
    <property type="match status" value="1"/>
</dbReference>
<dbReference type="HAMAP" id="MF_00296">
    <property type="entry name" value="MetX_acyltransf"/>
    <property type="match status" value="1"/>
</dbReference>
<dbReference type="InterPro" id="IPR000073">
    <property type="entry name" value="AB_hydrolase_1"/>
</dbReference>
<dbReference type="InterPro" id="IPR029058">
    <property type="entry name" value="AB_hydrolase_fold"/>
</dbReference>
<dbReference type="InterPro" id="IPR008220">
    <property type="entry name" value="HAT_MetX-like"/>
</dbReference>
<dbReference type="NCBIfam" id="NF006449">
    <property type="entry name" value="PRK08775.1"/>
    <property type="match status" value="1"/>
</dbReference>
<dbReference type="PANTHER" id="PTHR32268">
    <property type="entry name" value="HOMOSERINE O-ACETYLTRANSFERASE"/>
    <property type="match status" value="1"/>
</dbReference>
<dbReference type="PANTHER" id="PTHR32268:SF11">
    <property type="entry name" value="HOMOSERINE O-ACETYLTRANSFERASE"/>
    <property type="match status" value="1"/>
</dbReference>
<dbReference type="Pfam" id="PF00561">
    <property type="entry name" value="Abhydrolase_1"/>
    <property type="match status" value="1"/>
</dbReference>
<dbReference type="PIRSF" id="PIRSF000443">
    <property type="entry name" value="Homoser_Ac_trans"/>
    <property type="match status" value="1"/>
</dbReference>
<dbReference type="SUPFAM" id="SSF53474">
    <property type="entry name" value="alpha/beta-Hydrolases"/>
    <property type="match status" value="1"/>
</dbReference>